<keyword id="KW-1185">Reference proteome</keyword>
<dbReference type="EMBL" id="CR382134">
    <property type="protein sequence ID" value="CAG85589.2"/>
    <property type="molecule type" value="Genomic_DNA"/>
</dbReference>
<dbReference type="RefSeq" id="XP_457578.2">
    <property type="nucleotide sequence ID" value="XM_457578.1"/>
</dbReference>
<dbReference type="SMR" id="Q6BW41"/>
<dbReference type="FunCoup" id="Q6BW41">
    <property type="interactions" value="76"/>
</dbReference>
<dbReference type="STRING" id="284592.Q6BW41"/>
<dbReference type="GeneID" id="2913541"/>
<dbReference type="KEGG" id="dha:DEHA2B14542g"/>
<dbReference type="VEuPathDB" id="FungiDB:DEHA2B14542g"/>
<dbReference type="eggNOG" id="ENOG502QTAZ">
    <property type="taxonomic scope" value="Eukaryota"/>
</dbReference>
<dbReference type="HOGENOM" id="CLU_027501_0_0_1"/>
<dbReference type="InParanoid" id="Q6BW41"/>
<dbReference type="OMA" id="TQNDITH"/>
<dbReference type="OrthoDB" id="2305498at2759"/>
<dbReference type="Proteomes" id="UP000000599">
    <property type="component" value="Chromosome B"/>
</dbReference>
<dbReference type="GO" id="GO:0005935">
    <property type="term" value="C:cellular bud neck"/>
    <property type="evidence" value="ECO:0007669"/>
    <property type="project" value="EnsemblFungi"/>
</dbReference>
<dbReference type="GO" id="GO:0000131">
    <property type="term" value="C:incipient cellular bud site"/>
    <property type="evidence" value="ECO:0007669"/>
    <property type="project" value="EnsemblFungi"/>
</dbReference>
<dbReference type="GO" id="GO:0043332">
    <property type="term" value="C:mating projection tip"/>
    <property type="evidence" value="ECO:0007669"/>
    <property type="project" value="TreeGrafter"/>
</dbReference>
<dbReference type="GO" id="GO:0070880">
    <property type="term" value="P:fungal-type cell wall beta-glucan biosynthetic process"/>
    <property type="evidence" value="ECO:0007669"/>
    <property type="project" value="TreeGrafter"/>
</dbReference>
<dbReference type="GO" id="GO:0032995">
    <property type="term" value="P:regulation of fungal-type cell wall biogenesis"/>
    <property type="evidence" value="ECO:0007669"/>
    <property type="project" value="EnsemblFungi"/>
</dbReference>
<dbReference type="GO" id="GO:0007346">
    <property type="term" value="P:regulation of mitotic cell cycle"/>
    <property type="evidence" value="ECO:0007669"/>
    <property type="project" value="EnsemblFungi"/>
</dbReference>
<dbReference type="Gene3D" id="3.40.1580.10">
    <property type="entry name" value="SMI1/KNR4-like"/>
    <property type="match status" value="1"/>
</dbReference>
<dbReference type="InterPro" id="IPR009203">
    <property type="entry name" value="Knr4/Smi1"/>
</dbReference>
<dbReference type="InterPro" id="IPR018958">
    <property type="entry name" value="Knr4/Smi1-like_dom"/>
</dbReference>
<dbReference type="InterPro" id="IPR037883">
    <property type="entry name" value="Knr4/Smi1-like_sf"/>
</dbReference>
<dbReference type="InterPro" id="IPR051873">
    <property type="entry name" value="KNR4/SMI1_regulator"/>
</dbReference>
<dbReference type="PANTHER" id="PTHR47432">
    <property type="entry name" value="CELL WALL ASSEMBLY REGULATOR SMI1"/>
    <property type="match status" value="1"/>
</dbReference>
<dbReference type="PANTHER" id="PTHR47432:SF1">
    <property type="entry name" value="CELL WALL ASSEMBLY REGULATOR SMI1"/>
    <property type="match status" value="1"/>
</dbReference>
<dbReference type="Pfam" id="PF09346">
    <property type="entry name" value="SMI1_KNR4"/>
    <property type="match status" value="1"/>
</dbReference>
<dbReference type="PIRSF" id="PIRSF017023">
    <property type="entry name" value="KNR4"/>
    <property type="match status" value="1"/>
</dbReference>
<dbReference type="SMART" id="SM00860">
    <property type="entry name" value="SMI1_KNR4"/>
    <property type="match status" value="1"/>
</dbReference>
<dbReference type="SUPFAM" id="SSF160631">
    <property type="entry name" value="SMI1/KNR4-like"/>
    <property type="match status" value="1"/>
</dbReference>
<name>SMI1_DEBHA</name>
<organism>
    <name type="scientific">Debaryomyces hansenii (strain ATCC 36239 / CBS 767 / BCRC 21394 / JCM 1990 / NBRC 0083 / IGC 2968)</name>
    <name type="common">Yeast</name>
    <name type="synonym">Torulaspora hansenii</name>
    <dbReference type="NCBI Taxonomy" id="284592"/>
    <lineage>
        <taxon>Eukaryota</taxon>
        <taxon>Fungi</taxon>
        <taxon>Dikarya</taxon>
        <taxon>Ascomycota</taxon>
        <taxon>Saccharomycotina</taxon>
        <taxon>Pichiomycetes</taxon>
        <taxon>Debaryomycetaceae</taxon>
        <taxon>Debaryomyces</taxon>
    </lineage>
</organism>
<accession>Q6BW41</accession>
<proteinExistence type="inferred from homology"/>
<sequence>MKFGKLHEFIYSLSTQDKYSEFDPKKSFNRVNTQETELLFSHHNQSTASLIGGPTNDVDSTVNKNQFDGVHEVRLAWRHIKNWLLKYSPDLNSTLQSPCTDADLSDFQKDLNIKLPNCLIEFYKITDGQSYFNDNGSGGLVFGLKLMPIDEVMVMTEHWRKVADYLNSKLLHANQTNKLQELSKLETSHANSSQLKFSSSNLDLIEPVKIAKQQRHESAGSPNIPRQKSIPPGTIHDSFAHPMWIPIITDEVGNCIGIDLCPPTNGGGTWGQVILFGREFDNKYLIADNFGDFLLIFANDLEMGNWDFRSSLANNNQDLLIGSEGELVFVEKGTNKEIPYLEVLKKRCIEKWLSSLNESNSEKSEEIKHLIKDLNSNTSSILKFKNSMDQFVNNNISSIEGISDPIIHSENQIAGGSDNAKNQVKLGETSDTKQDDTSKIASTVSTSDEDE</sequence>
<comment type="similarity">
    <text evidence="2">Belongs to the KNR4/SMI1 family.</text>
</comment>
<feature type="chain" id="PRO_0000209874" description="KNR4/SMI1 homolog 1">
    <location>
        <begin position="1"/>
        <end position="451"/>
    </location>
</feature>
<feature type="region of interest" description="Disordered" evidence="1">
    <location>
        <begin position="410"/>
        <end position="451"/>
    </location>
</feature>
<feature type="compositionally biased region" description="Polar residues" evidence="1">
    <location>
        <begin position="410"/>
        <end position="422"/>
    </location>
</feature>
<feature type="compositionally biased region" description="Basic and acidic residues" evidence="1">
    <location>
        <begin position="428"/>
        <end position="438"/>
    </location>
</feature>
<feature type="compositionally biased region" description="Polar residues" evidence="1">
    <location>
        <begin position="439"/>
        <end position="451"/>
    </location>
</feature>
<protein>
    <recommendedName>
        <fullName>KNR4/SMI1 homolog 1</fullName>
    </recommendedName>
</protein>
<gene>
    <name type="ordered locus">DEHA2B14542g</name>
</gene>
<reference key="1">
    <citation type="journal article" date="2004" name="Nature">
        <title>Genome evolution in yeasts.</title>
        <authorList>
            <person name="Dujon B."/>
            <person name="Sherman D."/>
            <person name="Fischer G."/>
            <person name="Durrens P."/>
            <person name="Casaregola S."/>
            <person name="Lafontaine I."/>
            <person name="de Montigny J."/>
            <person name="Marck C."/>
            <person name="Neuveglise C."/>
            <person name="Talla E."/>
            <person name="Goffard N."/>
            <person name="Frangeul L."/>
            <person name="Aigle M."/>
            <person name="Anthouard V."/>
            <person name="Babour A."/>
            <person name="Barbe V."/>
            <person name="Barnay S."/>
            <person name="Blanchin S."/>
            <person name="Beckerich J.-M."/>
            <person name="Beyne E."/>
            <person name="Bleykasten C."/>
            <person name="Boisrame A."/>
            <person name="Boyer J."/>
            <person name="Cattolico L."/>
            <person name="Confanioleri F."/>
            <person name="de Daruvar A."/>
            <person name="Despons L."/>
            <person name="Fabre E."/>
            <person name="Fairhead C."/>
            <person name="Ferry-Dumazet H."/>
            <person name="Groppi A."/>
            <person name="Hantraye F."/>
            <person name="Hennequin C."/>
            <person name="Jauniaux N."/>
            <person name="Joyet P."/>
            <person name="Kachouri R."/>
            <person name="Kerrest A."/>
            <person name="Koszul R."/>
            <person name="Lemaire M."/>
            <person name="Lesur I."/>
            <person name="Ma L."/>
            <person name="Muller H."/>
            <person name="Nicaud J.-M."/>
            <person name="Nikolski M."/>
            <person name="Oztas S."/>
            <person name="Ozier-Kalogeropoulos O."/>
            <person name="Pellenz S."/>
            <person name="Potier S."/>
            <person name="Richard G.-F."/>
            <person name="Straub M.-L."/>
            <person name="Suleau A."/>
            <person name="Swennen D."/>
            <person name="Tekaia F."/>
            <person name="Wesolowski-Louvel M."/>
            <person name="Westhof E."/>
            <person name="Wirth B."/>
            <person name="Zeniou-Meyer M."/>
            <person name="Zivanovic Y."/>
            <person name="Bolotin-Fukuhara M."/>
            <person name="Thierry A."/>
            <person name="Bouchier C."/>
            <person name="Caudron B."/>
            <person name="Scarpelli C."/>
            <person name="Gaillardin C."/>
            <person name="Weissenbach J."/>
            <person name="Wincker P."/>
            <person name="Souciet J.-L."/>
        </authorList>
    </citation>
    <scope>NUCLEOTIDE SEQUENCE [LARGE SCALE GENOMIC DNA]</scope>
    <source>
        <strain>ATCC 36239 / CBS 767 / BCRC 21394 / JCM 1990 / NBRC 0083 / IGC 2968</strain>
    </source>
</reference>
<evidence type="ECO:0000256" key="1">
    <source>
        <dbReference type="SAM" id="MobiDB-lite"/>
    </source>
</evidence>
<evidence type="ECO:0000305" key="2"/>